<name>UVRC_LISMF</name>
<gene>
    <name evidence="1" type="primary">uvrC</name>
    <name type="ordered locus">LMOf2365_1243</name>
</gene>
<accession>Q720J5</accession>
<comment type="function">
    <text evidence="1">The UvrABC repair system catalyzes the recognition and processing of DNA lesions. UvrC both incises the 5' and 3' sides of the lesion. The N-terminal half is responsible for the 3' incision and the C-terminal half is responsible for the 5' incision.</text>
</comment>
<comment type="subunit">
    <text evidence="1">Interacts with UvrB in an incision complex.</text>
</comment>
<comment type="subcellular location">
    <subcellularLocation>
        <location evidence="1">Cytoplasm</location>
    </subcellularLocation>
</comment>
<comment type="similarity">
    <text evidence="1">Belongs to the UvrC family.</text>
</comment>
<feature type="chain" id="PRO_0000138313" description="UvrABC system protein C">
    <location>
        <begin position="1"/>
        <end position="603"/>
    </location>
</feature>
<feature type="domain" description="GIY-YIG" evidence="1">
    <location>
        <begin position="15"/>
        <end position="92"/>
    </location>
</feature>
<feature type="domain" description="UVR" evidence="1">
    <location>
        <begin position="197"/>
        <end position="232"/>
    </location>
</feature>
<proteinExistence type="inferred from homology"/>
<reference key="1">
    <citation type="journal article" date="2004" name="Nucleic Acids Res.">
        <title>Whole genome comparisons of serotype 4b and 1/2a strains of the food-borne pathogen Listeria monocytogenes reveal new insights into the core genome components of this species.</title>
        <authorList>
            <person name="Nelson K.E."/>
            <person name="Fouts D.E."/>
            <person name="Mongodin E.F."/>
            <person name="Ravel J."/>
            <person name="DeBoy R.T."/>
            <person name="Kolonay J.F."/>
            <person name="Rasko D.A."/>
            <person name="Angiuoli S.V."/>
            <person name="Gill S.R."/>
            <person name="Paulsen I.T."/>
            <person name="Peterson J.D."/>
            <person name="White O."/>
            <person name="Nelson W.C."/>
            <person name="Nierman W.C."/>
            <person name="Beanan M.J."/>
            <person name="Brinkac L.M."/>
            <person name="Daugherty S.C."/>
            <person name="Dodson R.J."/>
            <person name="Durkin A.S."/>
            <person name="Madupu R."/>
            <person name="Haft D.H."/>
            <person name="Selengut J."/>
            <person name="Van Aken S.E."/>
            <person name="Khouri H.M."/>
            <person name="Fedorova N."/>
            <person name="Forberger H.A."/>
            <person name="Tran B."/>
            <person name="Kathariou S."/>
            <person name="Wonderling L.D."/>
            <person name="Uhlich G.A."/>
            <person name="Bayles D.O."/>
            <person name="Luchansky J.B."/>
            <person name="Fraser C.M."/>
        </authorList>
    </citation>
    <scope>NUCLEOTIDE SEQUENCE [LARGE SCALE GENOMIC DNA]</scope>
    <source>
        <strain>F2365</strain>
    </source>
</reference>
<protein>
    <recommendedName>
        <fullName evidence="1">UvrABC system protein C</fullName>
        <shortName evidence="1">Protein UvrC</shortName>
    </recommendedName>
    <alternativeName>
        <fullName evidence="1">Excinuclease ABC subunit C</fullName>
    </alternativeName>
</protein>
<sequence length="603" mass="69404">MSSEHIQNKLALLPDQPGCYLMKDRQGTIIYVGKAKILKNRVRSYFSGTHDSKTQRLVQEIVDFEYIVTSSNVEALLLEINLIKKHDPRFNIRLKDDKTYPFIKITNERHPRLIITRQVKKDKGKYFGPYPNVYAANEVKRILDRLYPLRKCSTLPNKVCLYYHLGQCLAPCVFDVEASKYKEMQDEIVTFLNGGYKTVKNDLMKKMQEAAENMEFEKAGEFRDQINAIETTMEKQKMTMNDFVDRDVFGYAIDKGWMCVQVFFIRQGKLIERDVSQFPFYNDADEDFLTFIGQFYQKANHIPPKEIYLPDDVDSEAVQAVVPDTKIIVPQRGNKKDLVKLAYKNAKIALNEKFMLLERNEERTVGAVERLGEAMGIPTPSRVEAFDNSNIHGTDPVSAMVTFLDGKPSKNDYRKYKIKTVEGPDDYATMREVIRRRYWRVLKEELPMPDLILIDGGKGQIDSAKDVLTNELGLDIPVAGLAKDDKHRTSQLLFGDPLEIVPLERNSQEFYLLQRMQDEVHRFAITFHRQLRSKTGFQSILDGIPGVGPGRKKKLLKHFGSMKKLKEASVEEIKEAGVPLNVAEEVHKHITAFNEKAKNTEQK</sequence>
<keyword id="KW-0963">Cytoplasm</keyword>
<keyword id="KW-0227">DNA damage</keyword>
<keyword id="KW-0228">DNA excision</keyword>
<keyword id="KW-0234">DNA repair</keyword>
<keyword id="KW-0267">Excision nuclease</keyword>
<keyword id="KW-0742">SOS response</keyword>
<dbReference type="EMBL" id="AE017262">
    <property type="protein sequence ID" value="AAT04019.1"/>
    <property type="molecule type" value="Genomic_DNA"/>
</dbReference>
<dbReference type="RefSeq" id="WP_010958872.1">
    <property type="nucleotide sequence ID" value="NC_002973.6"/>
</dbReference>
<dbReference type="SMR" id="Q720J5"/>
<dbReference type="DNASU" id="2799810"/>
<dbReference type="KEGG" id="lmf:LMOf2365_1243"/>
<dbReference type="HOGENOM" id="CLU_014841_3_2_9"/>
<dbReference type="GO" id="GO:0005737">
    <property type="term" value="C:cytoplasm"/>
    <property type="evidence" value="ECO:0007669"/>
    <property type="project" value="UniProtKB-SubCell"/>
</dbReference>
<dbReference type="GO" id="GO:0009380">
    <property type="term" value="C:excinuclease repair complex"/>
    <property type="evidence" value="ECO:0007669"/>
    <property type="project" value="InterPro"/>
</dbReference>
<dbReference type="GO" id="GO:0003677">
    <property type="term" value="F:DNA binding"/>
    <property type="evidence" value="ECO:0007669"/>
    <property type="project" value="UniProtKB-UniRule"/>
</dbReference>
<dbReference type="GO" id="GO:0009381">
    <property type="term" value="F:excinuclease ABC activity"/>
    <property type="evidence" value="ECO:0007669"/>
    <property type="project" value="UniProtKB-UniRule"/>
</dbReference>
<dbReference type="GO" id="GO:0006289">
    <property type="term" value="P:nucleotide-excision repair"/>
    <property type="evidence" value="ECO:0007669"/>
    <property type="project" value="UniProtKB-UniRule"/>
</dbReference>
<dbReference type="GO" id="GO:0009432">
    <property type="term" value="P:SOS response"/>
    <property type="evidence" value="ECO:0007669"/>
    <property type="project" value="UniProtKB-UniRule"/>
</dbReference>
<dbReference type="CDD" id="cd10434">
    <property type="entry name" value="GIY-YIG_UvrC_Cho"/>
    <property type="match status" value="1"/>
</dbReference>
<dbReference type="FunFam" id="1.10.150.20:FF:000005">
    <property type="entry name" value="UvrABC system protein C"/>
    <property type="match status" value="1"/>
</dbReference>
<dbReference type="FunFam" id="3.30.420.340:FF:000002">
    <property type="entry name" value="UvrABC system protein C"/>
    <property type="match status" value="1"/>
</dbReference>
<dbReference type="FunFam" id="3.40.1440.10:FF:000001">
    <property type="entry name" value="UvrABC system protein C"/>
    <property type="match status" value="1"/>
</dbReference>
<dbReference type="FunFam" id="4.10.860.10:FF:000002">
    <property type="entry name" value="UvrABC system protein C"/>
    <property type="match status" value="1"/>
</dbReference>
<dbReference type="Gene3D" id="1.10.150.20">
    <property type="entry name" value="5' to 3' exonuclease, C-terminal subdomain"/>
    <property type="match status" value="1"/>
</dbReference>
<dbReference type="Gene3D" id="3.40.1440.10">
    <property type="entry name" value="GIY-YIG endonuclease"/>
    <property type="match status" value="1"/>
</dbReference>
<dbReference type="Gene3D" id="4.10.860.10">
    <property type="entry name" value="UVR domain"/>
    <property type="match status" value="1"/>
</dbReference>
<dbReference type="Gene3D" id="3.30.420.340">
    <property type="entry name" value="UvrC, RNAse H endonuclease domain"/>
    <property type="match status" value="1"/>
</dbReference>
<dbReference type="HAMAP" id="MF_00203">
    <property type="entry name" value="UvrC"/>
    <property type="match status" value="1"/>
</dbReference>
<dbReference type="InterPro" id="IPR041663">
    <property type="entry name" value="DisA/LigA_HHH"/>
</dbReference>
<dbReference type="InterPro" id="IPR000305">
    <property type="entry name" value="GIY-YIG_endonuc"/>
</dbReference>
<dbReference type="InterPro" id="IPR035901">
    <property type="entry name" value="GIY-YIG_endonuc_sf"/>
</dbReference>
<dbReference type="InterPro" id="IPR047296">
    <property type="entry name" value="GIY-YIG_UvrC_Cho"/>
</dbReference>
<dbReference type="InterPro" id="IPR010994">
    <property type="entry name" value="RuvA_2-like"/>
</dbReference>
<dbReference type="InterPro" id="IPR001943">
    <property type="entry name" value="UVR_dom"/>
</dbReference>
<dbReference type="InterPro" id="IPR036876">
    <property type="entry name" value="UVR_dom_sf"/>
</dbReference>
<dbReference type="InterPro" id="IPR050066">
    <property type="entry name" value="UvrABC_protein_C"/>
</dbReference>
<dbReference type="InterPro" id="IPR004791">
    <property type="entry name" value="UvrC"/>
</dbReference>
<dbReference type="InterPro" id="IPR001162">
    <property type="entry name" value="UvrC_RNase_H_dom"/>
</dbReference>
<dbReference type="InterPro" id="IPR038476">
    <property type="entry name" value="UvrC_RNase_H_dom_sf"/>
</dbReference>
<dbReference type="NCBIfam" id="TIGR00194">
    <property type="entry name" value="uvrC"/>
    <property type="match status" value="1"/>
</dbReference>
<dbReference type="PANTHER" id="PTHR30562:SF1">
    <property type="entry name" value="UVRABC SYSTEM PROTEIN C"/>
    <property type="match status" value="1"/>
</dbReference>
<dbReference type="PANTHER" id="PTHR30562">
    <property type="entry name" value="UVRC/OXIDOREDUCTASE"/>
    <property type="match status" value="1"/>
</dbReference>
<dbReference type="Pfam" id="PF01541">
    <property type="entry name" value="GIY-YIG"/>
    <property type="match status" value="1"/>
</dbReference>
<dbReference type="Pfam" id="PF12826">
    <property type="entry name" value="HHH_2"/>
    <property type="match status" value="1"/>
</dbReference>
<dbReference type="Pfam" id="PF02151">
    <property type="entry name" value="UVR"/>
    <property type="match status" value="1"/>
</dbReference>
<dbReference type="Pfam" id="PF22920">
    <property type="entry name" value="UvrC_RNaseH"/>
    <property type="match status" value="1"/>
</dbReference>
<dbReference type="Pfam" id="PF08459">
    <property type="entry name" value="UvrC_RNaseH_dom"/>
    <property type="match status" value="1"/>
</dbReference>
<dbReference type="SMART" id="SM00465">
    <property type="entry name" value="GIYc"/>
    <property type="match status" value="1"/>
</dbReference>
<dbReference type="SUPFAM" id="SSF46600">
    <property type="entry name" value="C-terminal UvrC-binding domain of UvrB"/>
    <property type="match status" value="1"/>
</dbReference>
<dbReference type="SUPFAM" id="SSF82771">
    <property type="entry name" value="GIY-YIG endonuclease"/>
    <property type="match status" value="1"/>
</dbReference>
<dbReference type="SUPFAM" id="SSF47781">
    <property type="entry name" value="RuvA domain 2-like"/>
    <property type="match status" value="1"/>
</dbReference>
<dbReference type="PROSITE" id="PS50164">
    <property type="entry name" value="GIY_YIG"/>
    <property type="match status" value="1"/>
</dbReference>
<dbReference type="PROSITE" id="PS50151">
    <property type="entry name" value="UVR"/>
    <property type="match status" value="1"/>
</dbReference>
<dbReference type="PROSITE" id="PS50165">
    <property type="entry name" value="UVRC"/>
    <property type="match status" value="1"/>
</dbReference>
<evidence type="ECO:0000255" key="1">
    <source>
        <dbReference type="HAMAP-Rule" id="MF_00203"/>
    </source>
</evidence>
<organism>
    <name type="scientific">Listeria monocytogenes serotype 4b (strain F2365)</name>
    <dbReference type="NCBI Taxonomy" id="265669"/>
    <lineage>
        <taxon>Bacteria</taxon>
        <taxon>Bacillati</taxon>
        <taxon>Bacillota</taxon>
        <taxon>Bacilli</taxon>
        <taxon>Bacillales</taxon>
        <taxon>Listeriaceae</taxon>
        <taxon>Listeria</taxon>
    </lineage>
</organism>